<keyword id="KW-0456">Lyase</keyword>
<keyword id="KW-0472">Membrane</keyword>
<keyword id="KW-0479">Metal-binding</keyword>
<keyword id="KW-0496">Mitochondrion</keyword>
<keyword id="KW-0999">Mitochondrion inner membrane</keyword>
<keyword id="KW-1185">Reference proteome</keyword>
<keyword id="KW-0809">Transit peptide</keyword>
<keyword id="KW-0831">Ubiquinone biosynthesis</keyword>
<keyword id="KW-0862">Zinc</keyword>
<gene>
    <name evidence="1" type="primary">COQ4</name>
    <name type="ordered locus">ZYRO0C04576g</name>
</gene>
<feature type="transit peptide" description="Mitochondrion" evidence="1">
    <location>
        <begin position="1"/>
        <end position="24"/>
    </location>
</feature>
<feature type="chain" id="PRO_0000388144" description="Ubiquinone biosynthesis protein COQ4, mitochondrial">
    <location>
        <begin position="25"/>
        <end position="332"/>
    </location>
</feature>
<feature type="binding site" evidence="1">
    <location>
        <position position="210"/>
    </location>
    <ligand>
        <name>Zn(2+)</name>
        <dbReference type="ChEBI" id="CHEBI:29105"/>
    </ligand>
</feature>
<feature type="binding site" evidence="1">
    <location>
        <position position="211"/>
    </location>
    <ligand>
        <name>Zn(2+)</name>
        <dbReference type="ChEBI" id="CHEBI:29105"/>
    </ligand>
</feature>
<feature type="binding site" evidence="1">
    <location>
        <position position="214"/>
    </location>
    <ligand>
        <name>Zn(2+)</name>
        <dbReference type="ChEBI" id="CHEBI:29105"/>
    </ligand>
</feature>
<feature type="binding site" evidence="1">
    <location>
        <position position="226"/>
    </location>
    <ligand>
        <name>Zn(2+)</name>
        <dbReference type="ChEBI" id="CHEBI:29105"/>
    </ligand>
</feature>
<accession>C5DT13</accession>
<reference key="1">
    <citation type="journal article" date="2009" name="Genome Res.">
        <title>Comparative genomics of protoploid Saccharomycetaceae.</title>
        <authorList>
            <consortium name="The Genolevures Consortium"/>
            <person name="Souciet J.-L."/>
            <person name="Dujon B."/>
            <person name="Gaillardin C."/>
            <person name="Johnston M."/>
            <person name="Baret P.V."/>
            <person name="Cliften P."/>
            <person name="Sherman D.J."/>
            <person name="Weissenbach J."/>
            <person name="Westhof E."/>
            <person name="Wincker P."/>
            <person name="Jubin C."/>
            <person name="Poulain J."/>
            <person name="Barbe V."/>
            <person name="Segurens B."/>
            <person name="Artiguenave F."/>
            <person name="Anthouard V."/>
            <person name="Vacherie B."/>
            <person name="Val M.-E."/>
            <person name="Fulton R.S."/>
            <person name="Minx P."/>
            <person name="Wilson R."/>
            <person name="Durrens P."/>
            <person name="Jean G."/>
            <person name="Marck C."/>
            <person name="Martin T."/>
            <person name="Nikolski M."/>
            <person name="Rolland T."/>
            <person name="Seret M.-L."/>
            <person name="Casaregola S."/>
            <person name="Despons L."/>
            <person name="Fairhead C."/>
            <person name="Fischer G."/>
            <person name="Lafontaine I."/>
            <person name="Leh V."/>
            <person name="Lemaire M."/>
            <person name="de Montigny J."/>
            <person name="Neuveglise C."/>
            <person name="Thierry A."/>
            <person name="Blanc-Lenfle I."/>
            <person name="Bleykasten C."/>
            <person name="Diffels J."/>
            <person name="Fritsch E."/>
            <person name="Frangeul L."/>
            <person name="Goeffon A."/>
            <person name="Jauniaux N."/>
            <person name="Kachouri-Lafond R."/>
            <person name="Payen C."/>
            <person name="Potier S."/>
            <person name="Pribylova L."/>
            <person name="Ozanne C."/>
            <person name="Richard G.-F."/>
            <person name="Sacerdot C."/>
            <person name="Straub M.-L."/>
            <person name="Talla E."/>
        </authorList>
    </citation>
    <scope>NUCLEOTIDE SEQUENCE [LARGE SCALE GENOMIC DNA]</scope>
    <source>
        <strain>ATCC 2623 / CBS 732 / BCRC 21506 / NBRC 1130 / NCYC 568 / NRRL Y-229</strain>
    </source>
</reference>
<evidence type="ECO:0000255" key="1">
    <source>
        <dbReference type="HAMAP-Rule" id="MF_03111"/>
    </source>
</evidence>
<sequence length="332" mass="38320">MLRLGVSRTPINRQFVGYEQRRHFIVASALTLGGFVFGKRAKLADAMENGELHNKNNDDEAIRKDRMDKRLKKLSETRPIKPRYEGHVPLYPHERMLLFAISGLKSFFHPEDGNNIVKLGESSAFPFVLESLKQCMLGDETGRRILREQPNITSDTLDMDRLKKMDKNSLGYTYYTWLITEGVSPDTRAPVKYIDDPLQAFIFKRYRQCHDFYHAINGLPIIIEGEIAIKALEAANMGIPMAALGALLAPLRLKPIQKERLYDIYLPWAIRTGLSCKPLINVYWEELLEKDVNELRKELGIQPPPNLRAIRQERSKIRKELKMKYDAYEVGM</sequence>
<proteinExistence type="inferred from homology"/>
<organism>
    <name type="scientific">Zygosaccharomyces rouxii (strain ATCC 2623 / CBS 732 / NBRC 1130 / NCYC 568 / NRRL Y-229)</name>
    <dbReference type="NCBI Taxonomy" id="559307"/>
    <lineage>
        <taxon>Eukaryota</taxon>
        <taxon>Fungi</taxon>
        <taxon>Dikarya</taxon>
        <taxon>Ascomycota</taxon>
        <taxon>Saccharomycotina</taxon>
        <taxon>Saccharomycetes</taxon>
        <taxon>Saccharomycetales</taxon>
        <taxon>Saccharomycetaceae</taxon>
        <taxon>Zygosaccharomyces</taxon>
    </lineage>
</organism>
<name>COQ4_ZYGRC</name>
<protein>
    <recommendedName>
        <fullName evidence="1">Ubiquinone biosynthesis protein COQ4, mitochondrial</fullName>
    </recommendedName>
    <alternativeName>
        <fullName>4-hydroxy-3-methoxy-5-polyprenylbenzoate decarboxylase</fullName>
        <ecNumber evidence="1">4.1.1.130</ecNumber>
    </alternativeName>
    <alternativeName>
        <fullName evidence="1">Coenzyme Q biosynthesis protein 4</fullName>
    </alternativeName>
</protein>
<comment type="function">
    <text evidence="1">Lyase that catalyzes the C1-decarboxylation of 4-hydroxy-3-methoxy-5-(all-trans-polyprenyl)benzoic acid into 2-methoxy-6-(all-trans-polyprenyl)phenol during ubiquinone biosynthesis.</text>
</comment>
<comment type="catalytic activity">
    <reaction evidence="1">
        <text>a 4-hydroxy-3-methoxy-5-(all-trans-polyprenyl)benzoate + H(+) = a 2-methoxy-6-(all-trans-polyprenyl)phenol + CO2</text>
        <dbReference type="Rhea" id="RHEA:81179"/>
        <dbReference type="Rhea" id="RHEA-COMP:9551"/>
        <dbReference type="Rhea" id="RHEA-COMP:10931"/>
        <dbReference type="ChEBI" id="CHEBI:15378"/>
        <dbReference type="ChEBI" id="CHEBI:16526"/>
        <dbReference type="ChEBI" id="CHEBI:62731"/>
        <dbReference type="ChEBI" id="CHEBI:84443"/>
        <dbReference type="EC" id="4.1.1.130"/>
    </reaction>
</comment>
<comment type="cofactor">
    <cofactor evidence="1">
        <name>Zn(2+)</name>
        <dbReference type="ChEBI" id="CHEBI:29105"/>
    </cofactor>
</comment>
<comment type="pathway">
    <text evidence="1">Cofactor biosynthesis; ubiquinone biosynthesis.</text>
</comment>
<comment type="subunit">
    <text evidence="1">Component of a multi-subunit COQ enzyme complex, composed of at least COQ3, COQ4, COQ5, COQ6, COQ7 and COQ9.</text>
</comment>
<comment type="subcellular location">
    <subcellularLocation>
        <location evidence="1">Mitochondrion inner membrane</location>
        <topology evidence="1">Peripheral membrane protein</topology>
        <orientation evidence="1">Matrix side</orientation>
    </subcellularLocation>
</comment>
<comment type="similarity">
    <text evidence="1">Belongs to the COQ4 family.</text>
</comment>
<dbReference type="EC" id="4.1.1.130" evidence="1"/>
<dbReference type="EMBL" id="CU928175">
    <property type="protein sequence ID" value="CAR26924.1"/>
    <property type="molecule type" value="Genomic_DNA"/>
</dbReference>
<dbReference type="RefSeq" id="XP_002495857.1">
    <property type="nucleotide sequence ID" value="XM_002495812.1"/>
</dbReference>
<dbReference type="SMR" id="C5DT13"/>
<dbReference type="FunCoup" id="C5DT13">
    <property type="interactions" value="555"/>
</dbReference>
<dbReference type="STRING" id="559307.C5DT13"/>
<dbReference type="GeneID" id="8203052"/>
<dbReference type="KEGG" id="zro:ZYRO0C04576g"/>
<dbReference type="HOGENOM" id="CLU_061241_0_2_1"/>
<dbReference type="InParanoid" id="C5DT13"/>
<dbReference type="UniPathway" id="UPA00232"/>
<dbReference type="Proteomes" id="UP000008536">
    <property type="component" value="Chromosome C"/>
</dbReference>
<dbReference type="GO" id="GO:0031314">
    <property type="term" value="C:extrinsic component of mitochondrial inner membrane"/>
    <property type="evidence" value="ECO:0007669"/>
    <property type="project" value="UniProtKB-UniRule"/>
</dbReference>
<dbReference type="GO" id="GO:0006744">
    <property type="term" value="P:ubiquinone biosynthetic process"/>
    <property type="evidence" value="ECO:0007669"/>
    <property type="project" value="UniProtKB-UniRule"/>
</dbReference>
<dbReference type="HAMAP" id="MF_03111">
    <property type="entry name" value="Coq4"/>
    <property type="match status" value="1"/>
</dbReference>
<dbReference type="InterPro" id="IPR007715">
    <property type="entry name" value="Coq4"/>
</dbReference>
<dbReference type="InterPro" id="IPR027540">
    <property type="entry name" value="Coq4_euk"/>
</dbReference>
<dbReference type="PANTHER" id="PTHR12922">
    <property type="entry name" value="UBIQUINONE BIOSYNTHESIS PROTEIN"/>
    <property type="match status" value="1"/>
</dbReference>
<dbReference type="PANTHER" id="PTHR12922:SF7">
    <property type="entry name" value="UBIQUINONE BIOSYNTHESIS PROTEIN COQ4 HOMOLOG, MITOCHONDRIAL"/>
    <property type="match status" value="1"/>
</dbReference>
<dbReference type="Pfam" id="PF05019">
    <property type="entry name" value="Coq4"/>
    <property type="match status" value="1"/>
</dbReference>